<name>BIOB_SYNSC</name>
<accession>Q3AJ51</accession>
<feature type="chain" id="PRO_0000381682" description="Biotin synthase">
    <location>
        <begin position="1"/>
        <end position="331"/>
    </location>
</feature>
<feature type="domain" description="Radical SAM core" evidence="2">
    <location>
        <begin position="40"/>
        <end position="269"/>
    </location>
</feature>
<feature type="binding site" evidence="1">
    <location>
        <position position="55"/>
    </location>
    <ligand>
        <name>[4Fe-4S] cluster</name>
        <dbReference type="ChEBI" id="CHEBI:49883"/>
        <note>4Fe-4S-S-AdoMet</note>
    </ligand>
</feature>
<feature type="binding site" evidence="1">
    <location>
        <position position="59"/>
    </location>
    <ligand>
        <name>[4Fe-4S] cluster</name>
        <dbReference type="ChEBI" id="CHEBI:49883"/>
        <note>4Fe-4S-S-AdoMet</note>
    </ligand>
</feature>
<feature type="binding site" evidence="1">
    <location>
        <position position="62"/>
    </location>
    <ligand>
        <name>[4Fe-4S] cluster</name>
        <dbReference type="ChEBI" id="CHEBI:49883"/>
        <note>4Fe-4S-S-AdoMet</note>
    </ligand>
</feature>
<feature type="binding site" evidence="1">
    <location>
        <position position="100"/>
    </location>
    <ligand>
        <name>[2Fe-2S] cluster</name>
        <dbReference type="ChEBI" id="CHEBI:190135"/>
    </ligand>
</feature>
<feature type="binding site" evidence="1">
    <location>
        <position position="132"/>
    </location>
    <ligand>
        <name>[2Fe-2S] cluster</name>
        <dbReference type="ChEBI" id="CHEBI:190135"/>
    </ligand>
</feature>
<feature type="binding site" evidence="1">
    <location>
        <position position="192"/>
    </location>
    <ligand>
        <name>[2Fe-2S] cluster</name>
        <dbReference type="ChEBI" id="CHEBI:190135"/>
    </ligand>
</feature>
<feature type="binding site" evidence="1">
    <location>
        <position position="264"/>
    </location>
    <ligand>
        <name>[2Fe-2S] cluster</name>
        <dbReference type="ChEBI" id="CHEBI:190135"/>
    </ligand>
</feature>
<organism>
    <name type="scientific">Synechococcus sp. (strain CC9605)</name>
    <dbReference type="NCBI Taxonomy" id="110662"/>
    <lineage>
        <taxon>Bacteria</taxon>
        <taxon>Bacillati</taxon>
        <taxon>Cyanobacteriota</taxon>
        <taxon>Cyanophyceae</taxon>
        <taxon>Synechococcales</taxon>
        <taxon>Synechococcaceae</taxon>
        <taxon>Synechococcus</taxon>
    </lineage>
</organism>
<evidence type="ECO:0000255" key="1">
    <source>
        <dbReference type="HAMAP-Rule" id="MF_01694"/>
    </source>
</evidence>
<evidence type="ECO:0000255" key="2">
    <source>
        <dbReference type="PROSITE-ProRule" id="PRU01266"/>
    </source>
</evidence>
<proteinExistence type="inferred from homology"/>
<sequence>MTLSIRHDWTTEEIQTLLELPLMELLWEAQTVHRKANPGYRVQLASLLSVKTGGCEEDCAYCSQSIHNSSDVTAFEAQMQVEPVLQRARAAKEAGADRFCMGWAWREIRDGAPFEAMLEMVRGVRGMGMEACVTAGMLTDQQAERLAEAGLTAYNHNLDTSPEHYDRIISTRTYQERLETLERVRKAGVTLCCGGIIGMGETLRDRASMLQVLASMNPHPESVPVNGLVAVEGTPLEDQAPFEPLELVRMVATARILMPHARVRLSAGRESMSREAQILCLQAGADSIFYGDVLLTTGNPDVEADRQLLSDAGVTANWQEETAAPVNCSPR</sequence>
<reference key="1">
    <citation type="submission" date="2005-07" db="EMBL/GenBank/DDBJ databases">
        <title>Complete sequence of Synechococcus sp. CC9605.</title>
        <authorList>
            <consortium name="US DOE Joint Genome Institute"/>
            <person name="Copeland A."/>
            <person name="Lucas S."/>
            <person name="Lapidus A."/>
            <person name="Barry K."/>
            <person name="Detter J.C."/>
            <person name="Glavina T."/>
            <person name="Hammon N."/>
            <person name="Israni S."/>
            <person name="Pitluck S."/>
            <person name="Schmutz J."/>
            <person name="Martinez M."/>
            <person name="Larimer F."/>
            <person name="Land M."/>
            <person name="Kyrpides N."/>
            <person name="Ivanova N."/>
            <person name="Richardson P."/>
        </authorList>
    </citation>
    <scope>NUCLEOTIDE SEQUENCE [LARGE SCALE GENOMIC DNA]</scope>
    <source>
        <strain>CC9605</strain>
    </source>
</reference>
<gene>
    <name evidence="1" type="primary">bioB</name>
    <name type="ordered locus">Syncc9605_1632</name>
</gene>
<dbReference type="EC" id="2.8.1.6" evidence="1"/>
<dbReference type="EMBL" id="CP000110">
    <property type="protein sequence ID" value="ABB35381.1"/>
    <property type="molecule type" value="Genomic_DNA"/>
</dbReference>
<dbReference type="RefSeq" id="WP_011364592.1">
    <property type="nucleotide sequence ID" value="NC_007516.1"/>
</dbReference>
<dbReference type="SMR" id="Q3AJ51"/>
<dbReference type="STRING" id="110662.Syncc9605_1632"/>
<dbReference type="KEGG" id="syd:Syncc9605_1632"/>
<dbReference type="eggNOG" id="COG0502">
    <property type="taxonomic scope" value="Bacteria"/>
</dbReference>
<dbReference type="HOGENOM" id="CLU_033172_1_2_3"/>
<dbReference type="OrthoDB" id="9786826at2"/>
<dbReference type="UniPathway" id="UPA00078">
    <property type="reaction ID" value="UER00162"/>
</dbReference>
<dbReference type="GO" id="GO:0051537">
    <property type="term" value="F:2 iron, 2 sulfur cluster binding"/>
    <property type="evidence" value="ECO:0007669"/>
    <property type="project" value="UniProtKB-KW"/>
</dbReference>
<dbReference type="GO" id="GO:0051539">
    <property type="term" value="F:4 iron, 4 sulfur cluster binding"/>
    <property type="evidence" value="ECO:0007669"/>
    <property type="project" value="UniProtKB-KW"/>
</dbReference>
<dbReference type="GO" id="GO:0004076">
    <property type="term" value="F:biotin synthase activity"/>
    <property type="evidence" value="ECO:0007669"/>
    <property type="project" value="UniProtKB-UniRule"/>
</dbReference>
<dbReference type="GO" id="GO:0005506">
    <property type="term" value="F:iron ion binding"/>
    <property type="evidence" value="ECO:0007669"/>
    <property type="project" value="UniProtKB-UniRule"/>
</dbReference>
<dbReference type="GO" id="GO:0009102">
    <property type="term" value="P:biotin biosynthetic process"/>
    <property type="evidence" value="ECO:0007669"/>
    <property type="project" value="UniProtKB-UniRule"/>
</dbReference>
<dbReference type="CDD" id="cd01335">
    <property type="entry name" value="Radical_SAM"/>
    <property type="match status" value="1"/>
</dbReference>
<dbReference type="Gene3D" id="3.20.20.70">
    <property type="entry name" value="Aldolase class I"/>
    <property type="match status" value="1"/>
</dbReference>
<dbReference type="HAMAP" id="MF_01694">
    <property type="entry name" value="BioB"/>
    <property type="match status" value="1"/>
</dbReference>
<dbReference type="InterPro" id="IPR013785">
    <property type="entry name" value="Aldolase_TIM"/>
</dbReference>
<dbReference type="InterPro" id="IPR010722">
    <property type="entry name" value="BATS_dom"/>
</dbReference>
<dbReference type="InterPro" id="IPR002684">
    <property type="entry name" value="Biotin_synth/BioAB"/>
</dbReference>
<dbReference type="InterPro" id="IPR024177">
    <property type="entry name" value="Biotin_synthase"/>
</dbReference>
<dbReference type="InterPro" id="IPR006638">
    <property type="entry name" value="Elp3/MiaA/NifB-like_rSAM"/>
</dbReference>
<dbReference type="InterPro" id="IPR007197">
    <property type="entry name" value="rSAM"/>
</dbReference>
<dbReference type="NCBIfam" id="TIGR00433">
    <property type="entry name" value="bioB"/>
    <property type="match status" value="1"/>
</dbReference>
<dbReference type="PANTHER" id="PTHR22976">
    <property type="entry name" value="BIOTIN SYNTHASE"/>
    <property type="match status" value="1"/>
</dbReference>
<dbReference type="PANTHER" id="PTHR22976:SF2">
    <property type="entry name" value="BIOTIN SYNTHASE, MITOCHONDRIAL"/>
    <property type="match status" value="1"/>
</dbReference>
<dbReference type="Pfam" id="PF06968">
    <property type="entry name" value="BATS"/>
    <property type="match status" value="1"/>
</dbReference>
<dbReference type="Pfam" id="PF04055">
    <property type="entry name" value="Radical_SAM"/>
    <property type="match status" value="1"/>
</dbReference>
<dbReference type="PIRSF" id="PIRSF001619">
    <property type="entry name" value="Biotin_synth"/>
    <property type="match status" value="1"/>
</dbReference>
<dbReference type="SFLD" id="SFLDG01060">
    <property type="entry name" value="BATS_domain_containing"/>
    <property type="match status" value="1"/>
</dbReference>
<dbReference type="SFLD" id="SFLDF00272">
    <property type="entry name" value="biotin_synthase"/>
    <property type="match status" value="1"/>
</dbReference>
<dbReference type="SMART" id="SM00876">
    <property type="entry name" value="BATS"/>
    <property type="match status" value="1"/>
</dbReference>
<dbReference type="SMART" id="SM00729">
    <property type="entry name" value="Elp3"/>
    <property type="match status" value="1"/>
</dbReference>
<dbReference type="SUPFAM" id="SSF102114">
    <property type="entry name" value="Radical SAM enzymes"/>
    <property type="match status" value="1"/>
</dbReference>
<dbReference type="PROSITE" id="PS51918">
    <property type="entry name" value="RADICAL_SAM"/>
    <property type="match status" value="1"/>
</dbReference>
<protein>
    <recommendedName>
        <fullName evidence="1">Biotin synthase</fullName>
        <ecNumber evidence="1">2.8.1.6</ecNumber>
    </recommendedName>
</protein>
<comment type="function">
    <text evidence="1">Catalyzes the conversion of dethiobiotin (DTB) to biotin by the insertion of a sulfur atom into dethiobiotin via a radical-based mechanism.</text>
</comment>
<comment type="catalytic activity">
    <reaction evidence="1">
        <text>(4R,5S)-dethiobiotin + (sulfur carrier)-SH + 2 reduced [2Fe-2S]-[ferredoxin] + 2 S-adenosyl-L-methionine = (sulfur carrier)-H + biotin + 2 5'-deoxyadenosine + 2 L-methionine + 2 oxidized [2Fe-2S]-[ferredoxin]</text>
        <dbReference type="Rhea" id="RHEA:22060"/>
        <dbReference type="Rhea" id="RHEA-COMP:10000"/>
        <dbReference type="Rhea" id="RHEA-COMP:10001"/>
        <dbReference type="Rhea" id="RHEA-COMP:14737"/>
        <dbReference type="Rhea" id="RHEA-COMP:14739"/>
        <dbReference type="ChEBI" id="CHEBI:17319"/>
        <dbReference type="ChEBI" id="CHEBI:29917"/>
        <dbReference type="ChEBI" id="CHEBI:33737"/>
        <dbReference type="ChEBI" id="CHEBI:33738"/>
        <dbReference type="ChEBI" id="CHEBI:57586"/>
        <dbReference type="ChEBI" id="CHEBI:57844"/>
        <dbReference type="ChEBI" id="CHEBI:59789"/>
        <dbReference type="ChEBI" id="CHEBI:64428"/>
        <dbReference type="ChEBI" id="CHEBI:149473"/>
        <dbReference type="EC" id="2.8.1.6"/>
    </reaction>
</comment>
<comment type="cofactor">
    <cofactor evidence="1">
        <name>[4Fe-4S] cluster</name>
        <dbReference type="ChEBI" id="CHEBI:49883"/>
    </cofactor>
    <text evidence="1">Binds 1 [4Fe-4S] cluster. The cluster is coordinated with 3 cysteines and an exchangeable S-adenosyl-L-methionine.</text>
</comment>
<comment type="cofactor">
    <cofactor evidence="1">
        <name>[2Fe-2S] cluster</name>
        <dbReference type="ChEBI" id="CHEBI:190135"/>
    </cofactor>
    <text evidence="1">Binds 1 [2Fe-2S] cluster. The cluster is coordinated with 3 cysteines and 1 arginine.</text>
</comment>
<comment type="pathway">
    <text evidence="1">Cofactor biosynthesis; biotin biosynthesis; biotin from 7,8-diaminononanoate: step 2/2.</text>
</comment>
<comment type="subunit">
    <text evidence="1">Homodimer.</text>
</comment>
<comment type="similarity">
    <text evidence="1">Belongs to the radical SAM superfamily. Biotin synthase family.</text>
</comment>
<keyword id="KW-0001">2Fe-2S</keyword>
<keyword id="KW-0004">4Fe-4S</keyword>
<keyword id="KW-0093">Biotin biosynthesis</keyword>
<keyword id="KW-0408">Iron</keyword>
<keyword id="KW-0411">Iron-sulfur</keyword>
<keyword id="KW-0479">Metal-binding</keyword>
<keyword id="KW-0949">S-adenosyl-L-methionine</keyword>
<keyword id="KW-0808">Transferase</keyword>